<dbReference type="EMBL" id="CP000886">
    <property type="protein sequence ID" value="ABX69638.1"/>
    <property type="molecule type" value="Genomic_DNA"/>
</dbReference>
<dbReference type="RefSeq" id="WP_000185213.1">
    <property type="nucleotide sequence ID" value="NC_010102.1"/>
</dbReference>
<dbReference type="SMR" id="A9MT38"/>
<dbReference type="KEGG" id="spq:SPAB_04321"/>
<dbReference type="PATRIC" id="fig|1016998.12.peg.4067"/>
<dbReference type="HOGENOM" id="CLU_056916_0_0_6"/>
<dbReference type="BioCyc" id="SENT1016998:SPAB_RS17600-MONOMER"/>
<dbReference type="Proteomes" id="UP000008556">
    <property type="component" value="Chromosome"/>
</dbReference>
<dbReference type="GO" id="GO:0005886">
    <property type="term" value="C:plasma membrane"/>
    <property type="evidence" value="ECO:0007669"/>
    <property type="project" value="UniProtKB-SubCell"/>
</dbReference>
<dbReference type="GO" id="GO:0022857">
    <property type="term" value="F:transmembrane transporter activity"/>
    <property type="evidence" value="ECO:0007669"/>
    <property type="project" value="InterPro"/>
</dbReference>
<dbReference type="FunFam" id="1.20.1250.20:FF:000032">
    <property type="entry name" value="Protein TsgA"/>
    <property type="match status" value="1"/>
</dbReference>
<dbReference type="FunFam" id="1.20.1250.20:FF:000052">
    <property type="entry name" value="Protein TsgA"/>
    <property type="match status" value="1"/>
</dbReference>
<dbReference type="Gene3D" id="1.20.1250.20">
    <property type="entry name" value="MFS general substrate transporter like domains"/>
    <property type="match status" value="2"/>
</dbReference>
<dbReference type="HAMAP" id="MF_01044">
    <property type="entry name" value="MFS_TsgA"/>
    <property type="match status" value="1"/>
</dbReference>
<dbReference type="InterPro" id="IPR011701">
    <property type="entry name" value="MFS"/>
</dbReference>
<dbReference type="InterPro" id="IPR020846">
    <property type="entry name" value="MFS_dom"/>
</dbReference>
<dbReference type="InterPro" id="IPR036259">
    <property type="entry name" value="MFS_trans_sf"/>
</dbReference>
<dbReference type="InterPro" id="IPR023528">
    <property type="entry name" value="MFS_TsgA"/>
</dbReference>
<dbReference type="InterPro" id="IPR050375">
    <property type="entry name" value="MFS_TsgA-like"/>
</dbReference>
<dbReference type="NCBIfam" id="NF002982">
    <property type="entry name" value="PRK03699.1"/>
    <property type="match status" value="1"/>
</dbReference>
<dbReference type="PANTHER" id="PTHR43702">
    <property type="entry name" value="L-FUCOSE-PROTON SYMPORTER"/>
    <property type="match status" value="1"/>
</dbReference>
<dbReference type="PANTHER" id="PTHR43702:SF3">
    <property type="entry name" value="PROTEIN TSGA"/>
    <property type="match status" value="1"/>
</dbReference>
<dbReference type="Pfam" id="PF07690">
    <property type="entry name" value="MFS_1"/>
    <property type="match status" value="1"/>
</dbReference>
<dbReference type="SUPFAM" id="SSF103473">
    <property type="entry name" value="MFS general substrate transporter"/>
    <property type="match status" value="1"/>
</dbReference>
<dbReference type="PROSITE" id="PS50850">
    <property type="entry name" value="MFS"/>
    <property type="match status" value="1"/>
</dbReference>
<name>TSGA_SALPB</name>
<evidence type="ECO:0000255" key="1">
    <source>
        <dbReference type="HAMAP-Rule" id="MF_01044"/>
    </source>
</evidence>
<comment type="subcellular location">
    <subcellularLocation>
        <location evidence="1">Cell inner membrane</location>
        <topology evidence="1">Multi-pass membrane protein</topology>
    </subcellularLocation>
</comment>
<comment type="similarity">
    <text evidence="1">Belongs to the major facilitator superfamily. TsgA family.</text>
</comment>
<protein>
    <recommendedName>
        <fullName evidence="1">Protein TsgA</fullName>
    </recommendedName>
</protein>
<accession>A9MT38</accession>
<reference key="1">
    <citation type="submission" date="2007-11" db="EMBL/GenBank/DDBJ databases">
        <authorList>
            <consortium name="The Salmonella enterica serovar Paratyphi B Genome Sequencing Project"/>
            <person name="McClelland M."/>
            <person name="Sanderson E.K."/>
            <person name="Porwollik S."/>
            <person name="Spieth J."/>
            <person name="Clifton W.S."/>
            <person name="Fulton R."/>
            <person name="Cordes M."/>
            <person name="Wollam A."/>
            <person name="Shah N."/>
            <person name="Pepin K."/>
            <person name="Bhonagiri V."/>
            <person name="Nash W."/>
            <person name="Johnson M."/>
            <person name="Thiruvilangam P."/>
            <person name="Wilson R."/>
        </authorList>
    </citation>
    <scope>NUCLEOTIDE SEQUENCE [LARGE SCALE GENOMIC DNA]</scope>
    <source>
        <strain>ATCC BAA-1250 / SPB7</strain>
    </source>
</reference>
<organism>
    <name type="scientific">Salmonella paratyphi B (strain ATCC BAA-1250 / SPB7)</name>
    <dbReference type="NCBI Taxonomy" id="1016998"/>
    <lineage>
        <taxon>Bacteria</taxon>
        <taxon>Pseudomonadati</taxon>
        <taxon>Pseudomonadota</taxon>
        <taxon>Gammaproteobacteria</taxon>
        <taxon>Enterobacterales</taxon>
        <taxon>Enterobacteriaceae</taxon>
        <taxon>Salmonella</taxon>
    </lineage>
</organism>
<proteinExistence type="inferred from homology"/>
<feature type="chain" id="PRO_1000084406" description="Protein TsgA">
    <location>
        <begin position="1"/>
        <end position="393"/>
    </location>
</feature>
<feature type="transmembrane region" description="Helical" evidence="1">
    <location>
        <begin position="11"/>
        <end position="31"/>
    </location>
</feature>
<feature type="transmembrane region" description="Helical" evidence="1">
    <location>
        <begin position="51"/>
        <end position="71"/>
    </location>
</feature>
<feature type="transmembrane region" description="Helical" evidence="1">
    <location>
        <begin position="78"/>
        <end position="98"/>
    </location>
</feature>
<feature type="transmembrane region" description="Helical" evidence="1">
    <location>
        <begin position="101"/>
        <end position="121"/>
    </location>
</feature>
<feature type="transmembrane region" description="Helical" evidence="1">
    <location>
        <begin position="134"/>
        <end position="154"/>
    </location>
</feature>
<feature type="transmembrane region" description="Helical" evidence="1">
    <location>
        <begin position="162"/>
        <end position="182"/>
    </location>
</feature>
<feature type="transmembrane region" description="Helical" evidence="1">
    <location>
        <begin position="206"/>
        <end position="226"/>
    </location>
</feature>
<feature type="transmembrane region" description="Helical" evidence="1">
    <location>
        <begin position="245"/>
        <end position="265"/>
    </location>
</feature>
<feature type="transmembrane region" description="Helical" evidence="1">
    <location>
        <begin position="273"/>
        <end position="293"/>
    </location>
</feature>
<feature type="transmembrane region" description="Helical" evidence="1">
    <location>
        <begin position="298"/>
        <end position="318"/>
    </location>
</feature>
<feature type="transmembrane region" description="Helical" evidence="1">
    <location>
        <begin position="332"/>
        <end position="352"/>
    </location>
</feature>
<feature type="transmembrane region" description="Helical" evidence="1">
    <location>
        <begin position="361"/>
        <end position="381"/>
    </location>
</feature>
<gene>
    <name evidence="1" type="primary">tsgA</name>
    <name type="ordered locus">SPAB_04321</name>
</gene>
<keyword id="KW-0997">Cell inner membrane</keyword>
<keyword id="KW-1003">Cell membrane</keyword>
<keyword id="KW-0472">Membrane</keyword>
<keyword id="KW-0812">Transmembrane</keyword>
<keyword id="KW-1133">Transmembrane helix</keyword>
<sequence length="393" mass="43146">MTNSNRIKLTWISFLSYALTGALVIVTGMVMGNIADYFHLPVSSMSNTFTFLNAGILISIFLNAWLMEIIPLKTQLRFGFILMVLAVAGLMFSHSLALFSAAMFVLGLVSGITMSIGTFLITQLYEGRQRGSRLLFTDSFFSMAGMIFPMVAAFLLARSIEWYWVYACIGLVYLAIFILTFGCEFPALGKHAQHSQAPVVKEKWGIGVLFLAVAALCYILGQLGFISWVPEYAKGLGMSLNDAGALVSDFWMSYMFGMWAFSFILRFFDLQRILTVLAGMAAVLMYLFITGTQAHMPWFILTLGFFSSAIYTSIITLGSQQTKVASPKLVNFILTCGTIGTMLTFVVTGPIVAHSGPQAALLTANGLYAVVFVMCFALGFVSRHRQHSSPAAH</sequence>